<name>VM2_AGKPI</name>
<comment type="function">
    <text evidence="4">Inhibits fibrinogen interaction with platelets. Acts by binding to alpha-IIb/beta-3 (ITGA2B/ITGB3) on the platelet surface and inhibits aggregation induced by ADP, thrombin, platelet-activating factor and collagen.</text>
</comment>
<comment type="subunit">
    <text evidence="1">Monomer (disintegrin).</text>
</comment>
<comment type="subcellular location">
    <subcellularLocation>
        <location evidence="4">Secreted</location>
    </subcellularLocation>
</comment>
<comment type="tissue specificity">
    <text evidence="7">Expressed by the venom gland.</text>
</comment>
<comment type="miscellaneous">
    <text>The disintegrin belongs to the medium disintegrin subfamily.</text>
</comment>
<comment type="similarity">
    <text evidence="6">Belongs to the venom metalloproteinase (M12B) family. P-II subfamily. P-IIa sub-subfamily.</text>
</comment>
<evidence type="ECO:0000250" key="1"/>
<evidence type="ECO:0000250" key="2">
    <source>
        <dbReference type="UniProtKB" id="Q0NZX5"/>
    </source>
</evidence>
<evidence type="ECO:0000255" key="3">
    <source>
        <dbReference type="PROSITE-ProRule" id="PRU00068"/>
    </source>
</evidence>
<evidence type="ECO:0000269" key="4">
    <source>
    </source>
</evidence>
<evidence type="ECO:0000303" key="5">
    <source>
    </source>
</evidence>
<evidence type="ECO:0000305" key="6"/>
<evidence type="ECO:0000305" key="7">
    <source>
    </source>
</evidence>
<keyword id="KW-1217">Cell adhesion impairing toxin</keyword>
<keyword id="KW-0903">Direct protein sequencing</keyword>
<keyword id="KW-1015">Disulfide bond</keyword>
<keyword id="KW-1199">Hemostasis impairing toxin</keyword>
<keyword id="KW-1201">Platelet aggregation inhibiting toxin</keyword>
<keyword id="KW-0964">Secreted</keyword>
<keyword id="KW-0800">Toxin</keyword>
<accession>P16338</accession>
<organism>
    <name type="scientific">Agkistrodon piscivorus piscivorus</name>
    <name type="common">Eastern cottonmouth</name>
    <dbReference type="NCBI Taxonomy" id="8716"/>
    <lineage>
        <taxon>Eukaryota</taxon>
        <taxon>Metazoa</taxon>
        <taxon>Chordata</taxon>
        <taxon>Craniata</taxon>
        <taxon>Vertebrata</taxon>
        <taxon>Euteleostomi</taxon>
        <taxon>Lepidosauria</taxon>
        <taxon>Squamata</taxon>
        <taxon>Bifurcata</taxon>
        <taxon>Unidentata</taxon>
        <taxon>Episquamata</taxon>
        <taxon>Toxicofera</taxon>
        <taxon>Serpentes</taxon>
        <taxon>Colubroidea</taxon>
        <taxon>Viperidae</taxon>
        <taxon>Crotalinae</taxon>
        <taxon>Agkistrodon</taxon>
    </lineage>
</organism>
<dbReference type="PIR" id="A33990">
    <property type="entry name" value="A33990"/>
</dbReference>
<dbReference type="SMR" id="P16338"/>
<dbReference type="GO" id="GO:0005576">
    <property type="term" value="C:extracellular region"/>
    <property type="evidence" value="ECO:0007669"/>
    <property type="project" value="UniProtKB-SubCell"/>
</dbReference>
<dbReference type="GO" id="GO:0090729">
    <property type="term" value="F:toxin activity"/>
    <property type="evidence" value="ECO:0007669"/>
    <property type="project" value="UniProtKB-KW"/>
</dbReference>
<dbReference type="FunFam" id="4.10.70.10:FF:000005">
    <property type="entry name" value="Zinc metalloproteinase/disintegrin"/>
    <property type="match status" value="1"/>
</dbReference>
<dbReference type="Gene3D" id="4.10.70.10">
    <property type="entry name" value="Disintegrin domain"/>
    <property type="match status" value="1"/>
</dbReference>
<dbReference type="InterPro" id="IPR018358">
    <property type="entry name" value="Disintegrin_CS"/>
</dbReference>
<dbReference type="InterPro" id="IPR001762">
    <property type="entry name" value="Disintegrin_dom"/>
</dbReference>
<dbReference type="InterPro" id="IPR036436">
    <property type="entry name" value="Disintegrin_dom_sf"/>
</dbReference>
<dbReference type="PANTHER" id="PTHR11905">
    <property type="entry name" value="ADAM A DISINTEGRIN AND METALLOPROTEASE DOMAIN"/>
    <property type="match status" value="1"/>
</dbReference>
<dbReference type="PANTHER" id="PTHR11905:SF159">
    <property type="entry name" value="ADAM METALLOPROTEASE"/>
    <property type="match status" value="1"/>
</dbReference>
<dbReference type="Pfam" id="PF00200">
    <property type="entry name" value="Disintegrin"/>
    <property type="match status" value="1"/>
</dbReference>
<dbReference type="PRINTS" id="PR00289">
    <property type="entry name" value="DISINTEGRIN"/>
</dbReference>
<dbReference type="SMART" id="SM00050">
    <property type="entry name" value="DISIN"/>
    <property type="match status" value="1"/>
</dbReference>
<dbReference type="SUPFAM" id="SSF57552">
    <property type="entry name" value="Blood coagulation inhibitor (disintegrin)"/>
    <property type="match status" value="1"/>
</dbReference>
<dbReference type="PROSITE" id="PS00427">
    <property type="entry name" value="DISINTEGRIN_1"/>
    <property type="match status" value="1"/>
</dbReference>
<dbReference type="PROSITE" id="PS50214">
    <property type="entry name" value="DISINTEGRIN_2"/>
    <property type="match status" value="1"/>
</dbReference>
<feature type="chain" id="PRO_0000101783" description="Disintegrin applaggin" evidence="4">
    <location>
        <begin position="1"/>
        <end position="71"/>
    </location>
</feature>
<feature type="domain" description="Disintegrin" evidence="3">
    <location>
        <begin position="1"/>
        <end position="71"/>
    </location>
</feature>
<feature type="short sequence motif" description="Cell attachment site">
    <location>
        <begin position="50"/>
        <end position="52"/>
    </location>
</feature>
<feature type="disulfide bond" evidence="2">
    <location>
        <begin position="6"/>
        <end position="21"/>
    </location>
</feature>
<feature type="disulfide bond" evidence="2">
    <location>
        <begin position="8"/>
        <end position="16"/>
    </location>
</feature>
<feature type="disulfide bond" evidence="2">
    <location>
        <begin position="15"/>
        <end position="38"/>
    </location>
</feature>
<feature type="disulfide bond" evidence="2">
    <location>
        <begin position="29"/>
        <end position="35"/>
    </location>
</feature>
<feature type="disulfide bond" evidence="2">
    <location>
        <begin position="34"/>
        <end position="58"/>
    </location>
</feature>
<feature type="disulfide bond" evidence="2 3">
    <location>
        <begin position="47"/>
        <end position="65"/>
    </location>
</feature>
<sequence>EAGEECDCGSPENPCCDAATCKLRPGAQCAEGLCCDQCKFMKEGTVCRARGDDVNDYCNGISAGCPRNPFH</sequence>
<reference key="1">
    <citation type="journal article" date="1989" name="Proc. Natl. Acad. Sci. U.S.A.">
        <title>Agkistrodon piscivorus piscivorus platelet aggregation inhibitor: a potent inhibitor of platelet activation.</title>
        <authorList>
            <person name="Chao B.H."/>
            <person name="Jakubowski J.A."/>
            <person name="Savage B."/>
            <person name="Ping Chow E."/>
            <person name="Marzec U.M."/>
            <person name="Harker L.A."/>
            <person name="Maraganore J.M."/>
        </authorList>
    </citation>
    <scope>PROTEIN SEQUENCE</scope>
    <scope>FUNCTION</scope>
    <scope>SUBCELLULAR LOCATION</scope>
    <source>
        <tissue>Venom</tissue>
    </source>
</reference>
<protein>
    <recommendedName>
        <fullName evidence="5">Disintegrin applaggin</fullName>
    </recommendedName>
    <alternativeName>
        <fullName>Applagin</fullName>
    </alternativeName>
    <alternativeName>
        <fullName>Platelet aggregation activation inhibitor</fullName>
    </alternativeName>
</protein>
<proteinExistence type="evidence at protein level"/>